<name>GREA_NEOSM</name>
<dbReference type="EMBL" id="CP000237">
    <property type="protein sequence ID" value="ABD46197.1"/>
    <property type="molecule type" value="Genomic_DNA"/>
</dbReference>
<dbReference type="RefSeq" id="WP_011452053.1">
    <property type="nucleotide sequence ID" value="NC_007798.1"/>
</dbReference>
<dbReference type="SMR" id="Q2GD99"/>
<dbReference type="STRING" id="222891.NSE_0669"/>
<dbReference type="KEGG" id="nse:NSE_0669"/>
<dbReference type="eggNOG" id="COG0782">
    <property type="taxonomic scope" value="Bacteria"/>
</dbReference>
<dbReference type="HOGENOM" id="CLU_101379_2_0_5"/>
<dbReference type="OrthoDB" id="9808774at2"/>
<dbReference type="Proteomes" id="UP000001942">
    <property type="component" value="Chromosome"/>
</dbReference>
<dbReference type="GO" id="GO:0003677">
    <property type="term" value="F:DNA binding"/>
    <property type="evidence" value="ECO:0007669"/>
    <property type="project" value="UniProtKB-UniRule"/>
</dbReference>
<dbReference type="GO" id="GO:0070063">
    <property type="term" value="F:RNA polymerase binding"/>
    <property type="evidence" value="ECO:0007669"/>
    <property type="project" value="InterPro"/>
</dbReference>
<dbReference type="GO" id="GO:0006354">
    <property type="term" value="P:DNA-templated transcription elongation"/>
    <property type="evidence" value="ECO:0007669"/>
    <property type="project" value="TreeGrafter"/>
</dbReference>
<dbReference type="GO" id="GO:0032784">
    <property type="term" value="P:regulation of DNA-templated transcription elongation"/>
    <property type="evidence" value="ECO:0007669"/>
    <property type="project" value="UniProtKB-UniRule"/>
</dbReference>
<dbReference type="FunFam" id="1.10.287.180:FF:000001">
    <property type="entry name" value="Transcription elongation factor GreA"/>
    <property type="match status" value="1"/>
</dbReference>
<dbReference type="FunFam" id="3.10.50.30:FF:000001">
    <property type="entry name" value="Transcription elongation factor GreA"/>
    <property type="match status" value="1"/>
</dbReference>
<dbReference type="Gene3D" id="3.10.50.30">
    <property type="entry name" value="Transcription elongation factor, GreA/GreB, C-terminal domain"/>
    <property type="match status" value="1"/>
</dbReference>
<dbReference type="Gene3D" id="1.10.287.180">
    <property type="entry name" value="Transcription elongation factor, GreA/GreB, N-terminal domain"/>
    <property type="match status" value="1"/>
</dbReference>
<dbReference type="HAMAP" id="MF_00105">
    <property type="entry name" value="GreA_GreB"/>
    <property type="match status" value="1"/>
</dbReference>
<dbReference type="InterPro" id="IPR036953">
    <property type="entry name" value="GreA/GreB_C_sf"/>
</dbReference>
<dbReference type="InterPro" id="IPR018151">
    <property type="entry name" value="TF_GreA/GreB_CS"/>
</dbReference>
<dbReference type="InterPro" id="IPR006359">
    <property type="entry name" value="Tscrpt_elong_fac_GreA"/>
</dbReference>
<dbReference type="InterPro" id="IPR028624">
    <property type="entry name" value="Tscrpt_elong_fac_GreA/B"/>
</dbReference>
<dbReference type="InterPro" id="IPR001437">
    <property type="entry name" value="Tscrpt_elong_fac_GreA/B_C"/>
</dbReference>
<dbReference type="InterPro" id="IPR023459">
    <property type="entry name" value="Tscrpt_elong_fac_GreA/B_fam"/>
</dbReference>
<dbReference type="InterPro" id="IPR022691">
    <property type="entry name" value="Tscrpt_elong_fac_GreA/B_N"/>
</dbReference>
<dbReference type="InterPro" id="IPR036805">
    <property type="entry name" value="Tscrpt_elong_fac_GreA/B_N_sf"/>
</dbReference>
<dbReference type="NCBIfam" id="TIGR01462">
    <property type="entry name" value="greA"/>
    <property type="match status" value="1"/>
</dbReference>
<dbReference type="NCBIfam" id="NF001261">
    <property type="entry name" value="PRK00226.1-2"/>
    <property type="match status" value="1"/>
</dbReference>
<dbReference type="NCBIfam" id="NF001263">
    <property type="entry name" value="PRK00226.1-4"/>
    <property type="match status" value="1"/>
</dbReference>
<dbReference type="NCBIfam" id="NF001264">
    <property type="entry name" value="PRK00226.1-5"/>
    <property type="match status" value="1"/>
</dbReference>
<dbReference type="PANTHER" id="PTHR30437">
    <property type="entry name" value="TRANSCRIPTION ELONGATION FACTOR GREA"/>
    <property type="match status" value="1"/>
</dbReference>
<dbReference type="PANTHER" id="PTHR30437:SF4">
    <property type="entry name" value="TRANSCRIPTION ELONGATION FACTOR GREA"/>
    <property type="match status" value="1"/>
</dbReference>
<dbReference type="Pfam" id="PF01272">
    <property type="entry name" value="GreA_GreB"/>
    <property type="match status" value="1"/>
</dbReference>
<dbReference type="Pfam" id="PF03449">
    <property type="entry name" value="GreA_GreB_N"/>
    <property type="match status" value="1"/>
</dbReference>
<dbReference type="PIRSF" id="PIRSF006092">
    <property type="entry name" value="GreA_GreB"/>
    <property type="match status" value="1"/>
</dbReference>
<dbReference type="SUPFAM" id="SSF54534">
    <property type="entry name" value="FKBP-like"/>
    <property type="match status" value="1"/>
</dbReference>
<dbReference type="SUPFAM" id="SSF46557">
    <property type="entry name" value="GreA transcript cleavage protein, N-terminal domain"/>
    <property type="match status" value="1"/>
</dbReference>
<dbReference type="PROSITE" id="PS00829">
    <property type="entry name" value="GREAB_1"/>
    <property type="match status" value="1"/>
</dbReference>
<evidence type="ECO:0000255" key="1">
    <source>
        <dbReference type="HAMAP-Rule" id="MF_00105"/>
    </source>
</evidence>
<proteinExistence type="inferred from homology"/>
<comment type="function">
    <text evidence="1">Necessary for efficient RNA polymerase transcription elongation past template-encoded arresting sites. The arresting sites in DNA have the property of trapping a certain fraction of elongating RNA polymerases that pass through, resulting in locked ternary complexes. Cleavage of the nascent transcript by cleavage factors such as GreA or GreB allows the resumption of elongation from the new 3'terminus. GreA releases sequences of 2 to 3 nucleotides.</text>
</comment>
<comment type="similarity">
    <text evidence="1">Belongs to the GreA/GreB family.</text>
</comment>
<gene>
    <name evidence="1" type="primary">greA</name>
    <name type="ordered locus">NSE_0669</name>
</gene>
<accession>Q2GD99</accession>
<protein>
    <recommendedName>
        <fullName evidence="1">Transcription elongation factor GreA</fullName>
    </recommendedName>
    <alternativeName>
        <fullName evidence="1">Transcript cleavage factor GreA</fullName>
    </alternativeName>
</protein>
<keyword id="KW-0175">Coiled coil</keyword>
<keyword id="KW-0238">DNA-binding</keyword>
<keyword id="KW-0804">Transcription</keyword>
<keyword id="KW-0805">Transcription regulation</keyword>
<sequence length="159" mass="17687">MRKLPITREGYCKLQEELEKLVKVVKPSVVAAVAQARELGDLSENAEYHEARKEQSFVEGKIRELQLCLSEAEVIDVSQFTGERVKFGASVTLENMESKSVLIYQIVGNLESDIKEGKISVSSPIGKAVMNKEVGEIVEIDLPSGKKTYKILGVEFRQS</sequence>
<reference key="1">
    <citation type="journal article" date="2006" name="PLoS Genet.">
        <title>Comparative genomics of emerging human ehrlichiosis agents.</title>
        <authorList>
            <person name="Dunning Hotopp J.C."/>
            <person name="Lin M."/>
            <person name="Madupu R."/>
            <person name="Crabtree J."/>
            <person name="Angiuoli S.V."/>
            <person name="Eisen J.A."/>
            <person name="Seshadri R."/>
            <person name="Ren Q."/>
            <person name="Wu M."/>
            <person name="Utterback T.R."/>
            <person name="Smith S."/>
            <person name="Lewis M."/>
            <person name="Khouri H."/>
            <person name="Zhang C."/>
            <person name="Niu H."/>
            <person name="Lin Q."/>
            <person name="Ohashi N."/>
            <person name="Zhi N."/>
            <person name="Nelson W.C."/>
            <person name="Brinkac L.M."/>
            <person name="Dodson R.J."/>
            <person name="Rosovitz M.J."/>
            <person name="Sundaram J.P."/>
            <person name="Daugherty S.C."/>
            <person name="Davidsen T."/>
            <person name="Durkin A.S."/>
            <person name="Gwinn M.L."/>
            <person name="Haft D.H."/>
            <person name="Selengut J.D."/>
            <person name="Sullivan S.A."/>
            <person name="Zafar N."/>
            <person name="Zhou L."/>
            <person name="Benahmed F."/>
            <person name="Forberger H."/>
            <person name="Halpin R."/>
            <person name="Mulligan S."/>
            <person name="Robinson J."/>
            <person name="White O."/>
            <person name="Rikihisa Y."/>
            <person name="Tettelin H."/>
        </authorList>
    </citation>
    <scope>NUCLEOTIDE SEQUENCE [LARGE SCALE GENOMIC DNA]</scope>
    <source>
        <strain>ATCC VR-367 / Miyayama</strain>
    </source>
</reference>
<organism>
    <name type="scientific">Neorickettsia sennetsu (strain ATCC VR-367 / Miyayama)</name>
    <name type="common">Ehrlichia sennetsu</name>
    <dbReference type="NCBI Taxonomy" id="222891"/>
    <lineage>
        <taxon>Bacteria</taxon>
        <taxon>Pseudomonadati</taxon>
        <taxon>Pseudomonadota</taxon>
        <taxon>Alphaproteobacteria</taxon>
        <taxon>Rickettsiales</taxon>
        <taxon>Anaplasmataceae</taxon>
        <taxon>Neorickettsia</taxon>
    </lineage>
</organism>
<feature type="chain" id="PRO_1000034284" description="Transcription elongation factor GreA">
    <location>
        <begin position="1"/>
        <end position="159"/>
    </location>
</feature>
<feature type="coiled-coil region" evidence="1">
    <location>
        <begin position="45"/>
        <end position="67"/>
    </location>
</feature>